<organism>
    <name type="scientific">Clostridium botulinum (strain Okra / Type B1)</name>
    <dbReference type="NCBI Taxonomy" id="498213"/>
    <lineage>
        <taxon>Bacteria</taxon>
        <taxon>Bacillati</taxon>
        <taxon>Bacillota</taxon>
        <taxon>Clostridia</taxon>
        <taxon>Eubacteriales</taxon>
        <taxon>Clostridiaceae</taxon>
        <taxon>Clostridium</taxon>
    </lineage>
</organism>
<feature type="chain" id="PRO_1000090141" description="SsrA-binding protein">
    <location>
        <begin position="1"/>
        <end position="156"/>
    </location>
</feature>
<evidence type="ECO:0000255" key="1">
    <source>
        <dbReference type="HAMAP-Rule" id="MF_00023"/>
    </source>
</evidence>
<reference key="1">
    <citation type="journal article" date="2007" name="PLoS ONE">
        <title>Analysis of the neurotoxin complex genes in Clostridium botulinum A1-A4 and B1 strains: BoNT/A3, /Ba4 and /B1 clusters are located within plasmids.</title>
        <authorList>
            <person name="Smith T.J."/>
            <person name="Hill K.K."/>
            <person name="Foley B.T."/>
            <person name="Detter J.C."/>
            <person name="Munk A.C."/>
            <person name="Bruce D.C."/>
            <person name="Doggett N.A."/>
            <person name="Smith L.A."/>
            <person name="Marks J.D."/>
            <person name="Xie G."/>
            <person name="Brettin T.S."/>
        </authorList>
    </citation>
    <scope>NUCLEOTIDE SEQUENCE [LARGE SCALE GENOMIC DNA]</scope>
    <source>
        <strain>Okra / Type B1</strain>
    </source>
</reference>
<protein>
    <recommendedName>
        <fullName evidence="1">SsrA-binding protein</fullName>
    </recommendedName>
    <alternativeName>
        <fullName evidence="1">Small protein B</fullName>
    </alternativeName>
</protein>
<comment type="function">
    <text evidence="1">Required for rescue of stalled ribosomes mediated by trans-translation. Binds to transfer-messenger RNA (tmRNA), required for stable association of tmRNA with ribosomes. tmRNA and SmpB together mimic tRNA shape, replacing the anticodon stem-loop with SmpB. tmRNA is encoded by the ssrA gene; the 2 termini fold to resemble tRNA(Ala) and it encodes a 'tag peptide', a short internal open reading frame. During trans-translation Ala-aminoacylated tmRNA acts like a tRNA, entering the A-site of stalled ribosomes, displacing the stalled mRNA. The ribosome then switches to translate the ORF on the tmRNA; the nascent peptide is terminated with the 'tag peptide' encoded by the tmRNA and targeted for degradation. The ribosome is freed to recommence translation, which seems to be the essential function of trans-translation.</text>
</comment>
<comment type="subcellular location">
    <subcellularLocation>
        <location evidence="1">Cytoplasm</location>
    </subcellularLocation>
    <text evidence="1">The tmRNA-SmpB complex associates with stalled 70S ribosomes.</text>
</comment>
<comment type="similarity">
    <text evidence="1">Belongs to the SmpB family.</text>
</comment>
<name>SSRP_CLOBK</name>
<keyword id="KW-0963">Cytoplasm</keyword>
<keyword id="KW-0694">RNA-binding</keyword>
<dbReference type="EMBL" id="CP000939">
    <property type="protein sequence ID" value="ACA44392.1"/>
    <property type="molecule type" value="Genomic_DNA"/>
</dbReference>
<dbReference type="RefSeq" id="WP_003356515.1">
    <property type="nucleotide sequence ID" value="NC_010516.1"/>
</dbReference>
<dbReference type="SMR" id="B1IDC3"/>
<dbReference type="GeneID" id="5184489"/>
<dbReference type="KEGG" id="cbb:CLD_0541"/>
<dbReference type="HOGENOM" id="CLU_108953_0_0_9"/>
<dbReference type="Proteomes" id="UP000008541">
    <property type="component" value="Chromosome"/>
</dbReference>
<dbReference type="GO" id="GO:0005829">
    <property type="term" value="C:cytosol"/>
    <property type="evidence" value="ECO:0007669"/>
    <property type="project" value="TreeGrafter"/>
</dbReference>
<dbReference type="GO" id="GO:0003723">
    <property type="term" value="F:RNA binding"/>
    <property type="evidence" value="ECO:0007669"/>
    <property type="project" value="UniProtKB-UniRule"/>
</dbReference>
<dbReference type="GO" id="GO:0070929">
    <property type="term" value="P:trans-translation"/>
    <property type="evidence" value="ECO:0007669"/>
    <property type="project" value="UniProtKB-UniRule"/>
</dbReference>
<dbReference type="CDD" id="cd09294">
    <property type="entry name" value="SmpB"/>
    <property type="match status" value="1"/>
</dbReference>
<dbReference type="Gene3D" id="2.40.280.10">
    <property type="match status" value="1"/>
</dbReference>
<dbReference type="HAMAP" id="MF_00023">
    <property type="entry name" value="SmpB"/>
    <property type="match status" value="1"/>
</dbReference>
<dbReference type="InterPro" id="IPR023620">
    <property type="entry name" value="SmpB"/>
</dbReference>
<dbReference type="InterPro" id="IPR000037">
    <property type="entry name" value="SsrA-bd_prot"/>
</dbReference>
<dbReference type="InterPro" id="IPR020081">
    <property type="entry name" value="SsrA-bd_prot_CS"/>
</dbReference>
<dbReference type="NCBIfam" id="NF003843">
    <property type="entry name" value="PRK05422.1"/>
    <property type="match status" value="1"/>
</dbReference>
<dbReference type="NCBIfam" id="TIGR00086">
    <property type="entry name" value="smpB"/>
    <property type="match status" value="1"/>
</dbReference>
<dbReference type="PANTHER" id="PTHR30308:SF2">
    <property type="entry name" value="SSRA-BINDING PROTEIN"/>
    <property type="match status" value="1"/>
</dbReference>
<dbReference type="PANTHER" id="PTHR30308">
    <property type="entry name" value="TMRNA-BINDING COMPONENT OF TRANS-TRANSLATION TAGGING COMPLEX"/>
    <property type="match status" value="1"/>
</dbReference>
<dbReference type="Pfam" id="PF01668">
    <property type="entry name" value="SmpB"/>
    <property type="match status" value="1"/>
</dbReference>
<dbReference type="SUPFAM" id="SSF74982">
    <property type="entry name" value="Small protein B (SmpB)"/>
    <property type="match status" value="1"/>
</dbReference>
<dbReference type="PROSITE" id="PS01317">
    <property type="entry name" value="SSRP"/>
    <property type="match status" value="1"/>
</dbReference>
<sequence>MSKKKGSNTLAENRKARHDYFIEETYEAGIELVGTEVKSIRQGKANLKDSYAEIRNGEVFVRNMHISPYEQGNIYNKDPLRDRKLLLHKSEIYKLVGFTTQQGYTLIPLSLYLKHGRVKVSLAVAKGKKNYDKRDAMLEKAAKREMDRQIKERSRY</sequence>
<proteinExistence type="inferred from homology"/>
<gene>
    <name evidence="1" type="primary">smpB</name>
    <name type="ordered locus">CLD_0541</name>
</gene>
<accession>B1IDC3</accession>